<proteinExistence type="inferred from homology"/>
<sequence>MDSNELPVLAYKDGENSVAPIPAHEQQLPTVTAEPWLEISKQGLQLEGLCFDRQGNLLLCEVFGGTIFHVNLPDKKVTELFKSHKQNPAAVKIHKDGRLFVCYLGDFESTGGIFMVDADGNDAQDIVSDIGTEYCIDDPVFDSKGGFYFTDFRGYSTNLKGGVYYVSPDFKSITPVIQNLAVANGVALSTDEKTLWVTETNANRLHRIDLLEDGVTIAPFGASIPYYFTGHEGPDSCCIDSDDNLYVAMYGQGKVLVFNKKGSPIGQILMPGRDQGHMLRSTHPAFIPGTDQLIICANDIENDGGSWIYTVKAFAKGHQSYQFH</sequence>
<evidence type="ECO:0000250" key="1"/>
<evidence type="ECO:0000255" key="2"/>
<evidence type="ECO:0000305" key="3"/>
<comment type="function">
    <text evidence="1">Exhibits lactonase activity. Acts in cells with perturbed membrane integrity and is possibly related to the membrane homeostasis (By similarity).</text>
</comment>
<comment type="cofactor">
    <cofactor evidence="1">
        <name>Ca(2+)</name>
        <dbReference type="ChEBI" id="CHEBI:29108"/>
    </cofactor>
    <text evidence="1">Binds 2 Ca(2+) ions per subunit.</text>
</comment>
<comment type="subcellular location">
    <subcellularLocation>
        <location evidence="1">Cytoplasm</location>
    </subcellularLocation>
</comment>
<comment type="similarity">
    <text evidence="3">Belongs to the SMP-30/CGR1 family.</text>
</comment>
<dbReference type="EC" id="3.1.1.-"/>
<dbReference type="EMBL" id="AP008934">
    <property type="protein sequence ID" value="BAE17472.1"/>
    <property type="molecule type" value="Genomic_DNA"/>
</dbReference>
<dbReference type="RefSeq" id="WP_011302306.1">
    <property type="nucleotide sequence ID" value="NC_007350.1"/>
</dbReference>
<dbReference type="SMR" id="Q4A0D3"/>
<dbReference type="GeneID" id="3615782"/>
<dbReference type="KEGG" id="ssp:SSP0327"/>
<dbReference type="PATRIC" id="fig|342451.11.peg.331"/>
<dbReference type="eggNOG" id="COG3386">
    <property type="taxonomic scope" value="Bacteria"/>
</dbReference>
<dbReference type="HOGENOM" id="CLU_036110_2_0_9"/>
<dbReference type="OrthoDB" id="2633250at2"/>
<dbReference type="Proteomes" id="UP000006371">
    <property type="component" value="Chromosome"/>
</dbReference>
<dbReference type="GO" id="GO:0005737">
    <property type="term" value="C:cytoplasm"/>
    <property type="evidence" value="ECO:0007669"/>
    <property type="project" value="UniProtKB-SubCell"/>
</dbReference>
<dbReference type="GO" id="GO:0016787">
    <property type="term" value="F:hydrolase activity"/>
    <property type="evidence" value="ECO:0007669"/>
    <property type="project" value="UniProtKB-KW"/>
</dbReference>
<dbReference type="GO" id="GO:0046872">
    <property type="term" value="F:metal ion binding"/>
    <property type="evidence" value="ECO:0007669"/>
    <property type="project" value="UniProtKB-KW"/>
</dbReference>
<dbReference type="Gene3D" id="2.120.10.30">
    <property type="entry name" value="TolB, C-terminal domain"/>
    <property type="match status" value="1"/>
</dbReference>
<dbReference type="InterPro" id="IPR011042">
    <property type="entry name" value="6-blade_b-propeller_TolB-like"/>
</dbReference>
<dbReference type="InterPro" id="IPR013658">
    <property type="entry name" value="SGL"/>
</dbReference>
<dbReference type="InterPro" id="IPR051262">
    <property type="entry name" value="SMP-30/CGR1_Lactonase"/>
</dbReference>
<dbReference type="PANTHER" id="PTHR47572:SF4">
    <property type="entry name" value="LACTONASE DRP35"/>
    <property type="match status" value="1"/>
</dbReference>
<dbReference type="PANTHER" id="PTHR47572">
    <property type="entry name" value="LIPOPROTEIN-RELATED"/>
    <property type="match status" value="1"/>
</dbReference>
<dbReference type="Pfam" id="PF08450">
    <property type="entry name" value="SGL"/>
    <property type="match status" value="1"/>
</dbReference>
<dbReference type="SUPFAM" id="SSF63829">
    <property type="entry name" value="Calcium-dependent phosphotriesterase"/>
    <property type="match status" value="1"/>
</dbReference>
<organism>
    <name type="scientific">Staphylococcus saprophyticus subsp. saprophyticus (strain ATCC 15305 / DSM 20229 / NCIMB 8711 / NCTC 7292 / S-41)</name>
    <dbReference type="NCBI Taxonomy" id="342451"/>
    <lineage>
        <taxon>Bacteria</taxon>
        <taxon>Bacillati</taxon>
        <taxon>Bacillota</taxon>
        <taxon>Bacilli</taxon>
        <taxon>Bacillales</taxon>
        <taxon>Staphylococcaceae</taxon>
        <taxon>Staphylococcus</taxon>
    </lineage>
</organism>
<gene>
    <name type="primary">drp35</name>
    <name type="ordered locus">SSP0327</name>
</gene>
<name>DRP35_STAS1</name>
<accession>Q4A0D3</accession>
<reference key="1">
    <citation type="journal article" date="2005" name="Proc. Natl. Acad. Sci. U.S.A.">
        <title>Whole genome sequence of Staphylococcus saprophyticus reveals the pathogenesis of uncomplicated urinary tract infection.</title>
        <authorList>
            <person name="Kuroda M."/>
            <person name="Yamashita A."/>
            <person name="Hirakawa H."/>
            <person name="Kumano M."/>
            <person name="Morikawa K."/>
            <person name="Higashide M."/>
            <person name="Maruyama A."/>
            <person name="Inose Y."/>
            <person name="Matoba K."/>
            <person name="Toh H."/>
            <person name="Kuhara S."/>
            <person name="Hattori M."/>
            <person name="Ohta T."/>
        </authorList>
    </citation>
    <scope>NUCLEOTIDE SEQUENCE [LARGE SCALE GENOMIC DNA]</scope>
    <source>
        <strain>ATCC 15305 / DSM 20229 / NCIMB 8711 / NCTC 7292 / S-41</strain>
    </source>
</reference>
<protein>
    <recommendedName>
        <fullName>Lactonase drp35</fullName>
        <ecNumber>3.1.1.-</ecNumber>
    </recommendedName>
</protein>
<keyword id="KW-0106">Calcium</keyword>
<keyword id="KW-0963">Cytoplasm</keyword>
<keyword id="KW-0378">Hydrolase</keyword>
<keyword id="KW-0479">Metal-binding</keyword>
<keyword id="KW-1185">Reference proteome</keyword>
<feature type="chain" id="PRO_0000259757" description="Lactonase drp35">
    <location>
        <begin position="1"/>
        <end position="324"/>
    </location>
</feature>
<feature type="active site" description="Proton donor" evidence="2">
    <location>
        <position position="235"/>
    </location>
</feature>
<feature type="binding site" evidence="1">
    <location>
        <position position="47"/>
    </location>
    <ligand>
        <name>Ca(2+)</name>
        <dbReference type="ChEBI" id="CHEBI:29108"/>
        <label>1</label>
        <note>catalytic</note>
    </ligand>
</feature>
<feature type="binding site" evidence="1">
    <location>
        <position position="109"/>
    </location>
    <ligand>
        <name>Ca(2+)</name>
        <dbReference type="ChEBI" id="CHEBI:29108"/>
        <label>2</label>
    </ligand>
</feature>
<feature type="binding site" evidence="1">
    <location>
        <position position="111"/>
    </location>
    <ligand>
        <name>Ca(2+)</name>
        <dbReference type="ChEBI" id="CHEBI:29108"/>
        <label>2</label>
    </ligand>
</feature>
<feature type="binding site" evidence="1">
    <location>
        <position position="129"/>
    </location>
    <ligand>
        <name>Ca(2+)</name>
        <dbReference type="ChEBI" id="CHEBI:29108"/>
        <label>2</label>
    </ligand>
</feature>
<feature type="binding site" evidence="1">
    <location>
        <position position="132"/>
    </location>
    <ligand>
        <name>Ca(2+)</name>
        <dbReference type="ChEBI" id="CHEBI:29108"/>
        <label>2</label>
    </ligand>
</feature>
<feature type="binding site" evidence="1">
    <location>
        <position position="134"/>
    </location>
    <ligand>
        <name>Ca(2+)</name>
        <dbReference type="ChEBI" id="CHEBI:29108"/>
        <label>2</label>
    </ligand>
</feature>
<feature type="binding site" evidence="1">
    <location>
        <position position="137"/>
    </location>
    <ligand>
        <name>Ca(2+)</name>
        <dbReference type="ChEBI" id="CHEBI:29108"/>
        <label>1</label>
        <note>catalytic</note>
    </ligand>
</feature>
<feature type="binding site" evidence="1">
    <location>
        <position position="184"/>
    </location>
    <ligand>
        <name>Ca(2+)</name>
        <dbReference type="ChEBI" id="CHEBI:29108"/>
        <label>1</label>
        <note>catalytic</note>
    </ligand>
</feature>
<feature type="binding site" evidence="1">
    <location>
        <position position="235"/>
    </location>
    <ligand>
        <name>Ca(2+)</name>
        <dbReference type="ChEBI" id="CHEBI:29108"/>
        <label>1</label>
        <note>catalytic</note>
    </ligand>
</feature>
<feature type="binding site" evidence="1">
    <location>
        <position position="236"/>
    </location>
    <ligand>
        <name>Ca(2+)</name>
        <dbReference type="ChEBI" id="CHEBI:29108"/>
        <label>1</label>
        <note>catalytic</note>
    </ligand>
</feature>